<accession>Q08454</accession>
<organismHost>
    <name type="scientific">Salmo</name>
    <dbReference type="NCBI Taxonomy" id="8028"/>
</organismHost>
<name>PHOSP_IHNVO</name>
<comment type="function">
    <text evidence="1">Essential component of the RNA polymerase transcription and replication complex. Binds the viral ribonucleocapsid and positions the L polymerase on the template (By similarity).</text>
</comment>
<comment type="subcellular location">
    <subcellularLocation>
        <location evidence="1">Host cytoplasm</location>
    </subcellularLocation>
</comment>
<comment type="PTM">
    <text>Phosphorylated.</text>
</comment>
<comment type="similarity">
    <text evidence="3">Belongs to the novirhabdovirus protein P family.</text>
</comment>
<protein>
    <recommendedName>
        <fullName>Phosphoprotein</fullName>
        <shortName>Protein P</shortName>
    </recommendedName>
    <alternativeName>
        <fullName>Protein M1</fullName>
    </alternativeName>
</protein>
<sequence length="230" mass="25951">MSDGEGEQFFNLEGEDILRLESRLKNPRNDGQIGKNPRQRKEDQAPQEEPKKTTRRPDKNKGLSQLEQLILKYVEEESCQDALKDFGGLIANIRQAHQAELTSHLEKVATEHRANLQALTKSQQEHEKVSKEILSAVIAIRSNLNENHSPRPKPLDPDQVKAARALGFGIGYRTALNVFDRIKGVTPDNAGSQEVKNMAIRAAEEDEYEGSPTFFRKVIDAVKKRMKQGQ</sequence>
<evidence type="ECO:0000250" key="1"/>
<evidence type="ECO:0000256" key="2">
    <source>
        <dbReference type="SAM" id="MobiDB-lite"/>
    </source>
</evidence>
<evidence type="ECO:0000305" key="3"/>
<keyword id="KW-1035">Host cytoplasm</keyword>
<keyword id="KW-0597">Phosphoprotein</keyword>
<keyword id="KW-0693">Viral RNA replication</keyword>
<dbReference type="EMBL" id="X89213">
    <property type="protein sequence ID" value="CAA61496.1"/>
    <property type="molecule type" value="Genomic_RNA"/>
</dbReference>
<dbReference type="EMBL" id="X73872">
    <property type="protein sequence ID" value="CAA52072.1"/>
    <property type="molecule type" value="Genomic_RNA"/>
</dbReference>
<dbReference type="SMR" id="Q08454"/>
<dbReference type="Proteomes" id="UP000007211">
    <property type="component" value="Genome"/>
</dbReference>
<dbReference type="GO" id="GO:0030430">
    <property type="term" value="C:host cell cytoplasm"/>
    <property type="evidence" value="ECO:0007669"/>
    <property type="project" value="UniProtKB-SubCell"/>
</dbReference>
<dbReference type="InterPro" id="IPR005010">
    <property type="entry name" value="Rhabdo_M1"/>
</dbReference>
<dbReference type="Pfam" id="PF03342">
    <property type="entry name" value="Rhabdo_M1"/>
    <property type="match status" value="1"/>
</dbReference>
<reference key="1">
    <citation type="journal article" date="1996" name="J. Gen. Virol.">
        <title>Identification of the non-virion (NV) protein of fish rhabdoviruses viral haemorrhagic septicaemia virus and infectious haematopoietic necrosis virus.</title>
        <authorList>
            <person name="Schutze H."/>
            <person name="Enzmann P.J."/>
            <person name="Mundt E."/>
            <person name="Mettenleiter T.C."/>
        </authorList>
    </citation>
    <scope>NUCLEOTIDE SEQUENCE [GENOMIC RNA]</scope>
</reference>
<reference key="2">
    <citation type="journal article" date="1995" name="J. Gen. Virol.">
        <title>Complete genomic sequence of the fish rhabdovirus infectious haematopoietic necrosis virus.</title>
        <authorList>
            <person name="Schutze H."/>
            <person name="Enzmann P.J."/>
            <person name="Kuchling R."/>
            <person name="Mundt E."/>
            <person name="Niemann H."/>
            <person name="Mettenleiter T.C."/>
        </authorList>
    </citation>
    <scope>NUCLEOTIDE SEQUENCE [GENOMIC RNA]</scope>
</reference>
<gene>
    <name type="primary">P</name>
</gene>
<organism>
    <name type="scientific">Infectious hematopoietic necrosis virus (strain Oregon69)</name>
    <name type="common">IHNV</name>
    <dbReference type="NCBI Taxonomy" id="429315"/>
    <lineage>
        <taxon>Viruses</taxon>
        <taxon>Riboviria</taxon>
        <taxon>Orthornavirae</taxon>
        <taxon>Negarnaviricota</taxon>
        <taxon>Haploviricotina</taxon>
        <taxon>Monjiviricetes</taxon>
        <taxon>Mononegavirales</taxon>
        <taxon>Rhabdoviridae</taxon>
        <taxon>Gammarhabdovirinae</taxon>
        <taxon>Novirhabdovirus</taxon>
        <taxon>Novirhabdovirus salmonid</taxon>
    </lineage>
</organism>
<feature type="chain" id="PRO_0000282895" description="Phosphoprotein">
    <location>
        <begin position="1"/>
        <end position="230"/>
    </location>
</feature>
<feature type="region of interest" description="Disordered" evidence="2">
    <location>
        <begin position="21"/>
        <end position="62"/>
    </location>
</feature>
<feature type="compositionally biased region" description="Basic and acidic residues" evidence="2">
    <location>
        <begin position="39"/>
        <end position="61"/>
    </location>
</feature>
<proteinExistence type="inferred from homology"/>